<reference key="1">
    <citation type="journal article" date="1999" name="Nat. Genet.">
        <title>Comparative genomes of Chlamydia pneumoniae and C. trachomatis.</title>
        <authorList>
            <person name="Kalman S."/>
            <person name="Mitchell W.P."/>
            <person name="Marathe R."/>
            <person name="Lammel C.J."/>
            <person name="Fan J."/>
            <person name="Hyman R.W."/>
            <person name="Olinger L."/>
            <person name="Grimwood J."/>
            <person name="Davis R.W."/>
            <person name="Stephens R.S."/>
        </authorList>
    </citation>
    <scope>NUCLEOTIDE SEQUENCE [LARGE SCALE GENOMIC DNA]</scope>
    <source>
        <strain>CWL029</strain>
    </source>
</reference>
<reference key="2">
    <citation type="journal article" date="2000" name="Nucleic Acids Res.">
        <title>Genome sequences of Chlamydia trachomatis MoPn and Chlamydia pneumoniae AR39.</title>
        <authorList>
            <person name="Read T.D."/>
            <person name="Brunham R.C."/>
            <person name="Shen C."/>
            <person name="Gill S.R."/>
            <person name="Heidelberg J.F."/>
            <person name="White O."/>
            <person name="Hickey E.K."/>
            <person name="Peterson J.D."/>
            <person name="Utterback T.R."/>
            <person name="Berry K.J."/>
            <person name="Bass S."/>
            <person name="Linher K.D."/>
            <person name="Weidman J.F."/>
            <person name="Khouri H.M."/>
            <person name="Craven B."/>
            <person name="Bowman C."/>
            <person name="Dodson R.J."/>
            <person name="Gwinn M.L."/>
            <person name="Nelson W.C."/>
            <person name="DeBoy R.T."/>
            <person name="Kolonay J.F."/>
            <person name="McClarty G."/>
            <person name="Salzberg S.L."/>
            <person name="Eisen J.A."/>
            <person name="Fraser C.M."/>
        </authorList>
    </citation>
    <scope>NUCLEOTIDE SEQUENCE [LARGE SCALE GENOMIC DNA]</scope>
    <source>
        <strain>AR39</strain>
    </source>
</reference>
<reference key="3">
    <citation type="journal article" date="2000" name="Nucleic Acids Res.">
        <title>Comparison of whole genome sequences of Chlamydia pneumoniae J138 from Japan and CWL029 from USA.</title>
        <authorList>
            <person name="Shirai M."/>
            <person name="Hirakawa H."/>
            <person name="Kimoto M."/>
            <person name="Tabuchi M."/>
            <person name="Kishi F."/>
            <person name="Ouchi K."/>
            <person name="Shiba T."/>
            <person name="Ishii K."/>
            <person name="Hattori M."/>
            <person name="Kuhara S."/>
            <person name="Nakazawa T."/>
        </authorList>
    </citation>
    <scope>NUCLEOTIDE SEQUENCE [LARGE SCALE GENOMIC DNA]</scope>
    <source>
        <strain>J138</strain>
    </source>
</reference>
<reference key="4">
    <citation type="submission" date="2002-05" db="EMBL/GenBank/DDBJ databases">
        <title>The genome sequence of Chlamydia pneumoniae TW183 and comparison with other Chlamydia strains based on whole genome sequence analysis.</title>
        <authorList>
            <person name="Geng M.M."/>
            <person name="Schuhmacher A."/>
            <person name="Muehldorfer I."/>
            <person name="Bensch K.W."/>
            <person name="Schaefer K.P."/>
            <person name="Schneider S."/>
            <person name="Pohl T."/>
            <person name="Essig A."/>
            <person name="Marre R."/>
            <person name="Melchers K."/>
        </authorList>
    </citation>
    <scope>NUCLEOTIDE SEQUENCE [LARGE SCALE GENOMIC DNA]</scope>
    <source>
        <strain>TW-183</strain>
    </source>
</reference>
<evidence type="ECO:0000255" key="1">
    <source>
        <dbReference type="HAMAP-Rule" id="MF_00318"/>
    </source>
</evidence>
<evidence type="ECO:0000305" key="2"/>
<proteinExistence type="inferred from homology"/>
<comment type="function">
    <text evidence="1">Catalyzes the reversible conversion of 2-phosphoglycerate (2-PG) into phosphoenolpyruvate (PEP). It is essential for the degradation of carbohydrates via glycolysis.</text>
</comment>
<comment type="catalytic activity">
    <reaction evidence="1">
        <text>(2R)-2-phosphoglycerate = phosphoenolpyruvate + H2O</text>
        <dbReference type="Rhea" id="RHEA:10164"/>
        <dbReference type="ChEBI" id="CHEBI:15377"/>
        <dbReference type="ChEBI" id="CHEBI:58289"/>
        <dbReference type="ChEBI" id="CHEBI:58702"/>
        <dbReference type="EC" id="4.2.1.11"/>
    </reaction>
</comment>
<comment type="cofactor">
    <cofactor evidence="1">
        <name>Mg(2+)</name>
        <dbReference type="ChEBI" id="CHEBI:18420"/>
    </cofactor>
    <text evidence="1">Binds a second Mg(2+) ion via substrate during catalysis.</text>
</comment>
<comment type="pathway">
    <text evidence="1">Carbohydrate degradation; glycolysis; pyruvate from D-glyceraldehyde 3-phosphate: step 4/5.</text>
</comment>
<comment type="subcellular location">
    <subcellularLocation>
        <location evidence="1">Cytoplasm</location>
    </subcellularLocation>
    <subcellularLocation>
        <location evidence="1">Secreted</location>
    </subcellularLocation>
    <subcellularLocation>
        <location evidence="1">Cell surface</location>
    </subcellularLocation>
    <text evidence="1">Fractions of enolase are present in both the cytoplasm and on the cell surface.</text>
</comment>
<comment type="similarity">
    <text evidence="1">Belongs to the enolase family.</text>
</comment>
<feature type="chain" id="PRO_0000133867" description="Enolase">
    <location>
        <begin position="1"/>
        <end position="428"/>
    </location>
</feature>
<feature type="active site" description="Proton donor" evidence="1">
    <location>
        <position position="207"/>
    </location>
</feature>
<feature type="active site" description="Proton acceptor" evidence="1">
    <location>
        <position position="335"/>
    </location>
</feature>
<feature type="binding site" evidence="1">
    <location>
        <position position="165"/>
    </location>
    <ligand>
        <name>(2R)-2-phosphoglycerate</name>
        <dbReference type="ChEBI" id="CHEBI:58289"/>
    </ligand>
</feature>
<feature type="binding site" evidence="1">
    <location>
        <position position="244"/>
    </location>
    <ligand>
        <name>Mg(2+)</name>
        <dbReference type="ChEBI" id="CHEBI:18420"/>
    </ligand>
</feature>
<feature type="binding site" evidence="1">
    <location>
        <position position="283"/>
    </location>
    <ligand>
        <name>Mg(2+)</name>
        <dbReference type="ChEBI" id="CHEBI:18420"/>
    </ligand>
</feature>
<feature type="binding site" evidence="1">
    <location>
        <position position="310"/>
    </location>
    <ligand>
        <name>Mg(2+)</name>
        <dbReference type="ChEBI" id="CHEBI:18420"/>
    </ligand>
</feature>
<feature type="binding site" evidence="1">
    <location>
        <position position="335"/>
    </location>
    <ligand>
        <name>(2R)-2-phosphoglycerate</name>
        <dbReference type="ChEBI" id="CHEBI:58289"/>
    </ligand>
</feature>
<feature type="binding site" evidence="1">
    <location>
        <position position="364"/>
    </location>
    <ligand>
        <name>(2R)-2-phosphoglycerate</name>
        <dbReference type="ChEBI" id="CHEBI:58289"/>
    </ligand>
</feature>
<feature type="binding site" evidence="1">
    <location>
        <position position="365"/>
    </location>
    <ligand>
        <name>(2R)-2-phosphoglycerate</name>
        <dbReference type="ChEBI" id="CHEBI:58289"/>
    </ligand>
</feature>
<feature type="binding site" evidence="1">
    <location>
        <position position="386"/>
    </location>
    <ligand>
        <name>(2R)-2-phosphoglycerate</name>
        <dbReference type="ChEBI" id="CHEBI:58289"/>
    </ligand>
</feature>
<feature type="sequence conflict" description="In Ref. 1; AAD18938 and 4; AAP98758." evidence="2" ref="1 4">
    <original>G</original>
    <variation>E</variation>
    <location>
        <position position="163"/>
    </location>
</feature>
<feature type="sequence conflict" description="In Ref. 4; AAP98758." evidence="2" ref="4">
    <original>S</original>
    <variation>A</variation>
    <location>
        <position position="422"/>
    </location>
</feature>
<sequence length="428" mass="46032">MFEAVIADIQAREILDSRGYPTLHVKVTTSTGSVGEARVPSGASTGKKEALEFRDTDSPRYQGKGVLQAVKNVKEILFPLVKGCSVYEQSLIDSLMMDSDGSPNKETLGANAILGVSLATAHAAAATLRRPLYRYLGGCFACSLPCPMMNLINGGMHADNGLGFQEFMIRPIGASSIKEAVNMGADVFHTLKKLLHERGLSTGVGDEGGFAPNLASNEEALELLLLAIEKAGFTPGKDISLALDCAASSFYNVKTGTYDGRHYEEQIAILSNLCDRYPIDSIEDGLAEEDYDGWALLTEVLGEKVQIVGDDLFVTNPELILEGISNGLANSVLIKPNQIGTLTETVYAIKLAQMAGYTTIISHRSGETTDTTIADLAVAFNAGQIKTGSLSRSERVAKYNRLMEIEEELGSEAIFTDSNVFSYEDSEE</sequence>
<keyword id="KW-0963">Cytoplasm</keyword>
<keyword id="KW-0324">Glycolysis</keyword>
<keyword id="KW-0456">Lyase</keyword>
<keyword id="KW-0460">Magnesium</keyword>
<keyword id="KW-0479">Metal-binding</keyword>
<keyword id="KW-0964">Secreted</keyword>
<protein>
    <recommendedName>
        <fullName evidence="1">Enolase</fullName>
        <ecNumber evidence="1">4.2.1.11</ecNumber>
    </recommendedName>
    <alternativeName>
        <fullName evidence="1">2-phospho-D-glycerate hydro-lyase</fullName>
    </alternativeName>
    <alternativeName>
        <fullName evidence="1">2-phosphoglycerate dehydratase</fullName>
    </alternativeName>
</protein>
<accession>Q9Z7A6</accession>
<accession>Q9JS49</accession>
<name>ENO_CHLPN</name>
<dbReference type="EC" id="4.2.1.11" evidence="1"/>
<dbReference type="EMBL" id="AE001363">
    <property type="protein sequence ID" value="AAD18938.1"/>
    <property type="molecule type" value="Genomic_DNA"/>
</dbReference>
<dbReference type="EMBL" id="AE002161">
    <property type="protein sequence ID" value="AAF38843.1"/>
    <property type="molecule type" value="Genomic_DNA"/>
</dbReference>
<dbReference type="EMBL" id="BA000008">
    <property type="protein sequence ID" value="BAA99008.1"/>
    <property type="molecule type" value="Genomic_DNA"/>
</dbReference>
<dbReference type="EMBL" id="AE009440">
    <property type="protein sequence ID" value="AAP98758.1"/>
    <property type="molecule type" value="Genomic_DNA"/>
</dbReference>
<dbReference type="PIR" id="A72034">
    <property type="entry name" value="A72034"/>
</dbReference>
<dbReference type="PIR" id="F86590">
    <property type="entry name" value="F86590"/>
</dbReference>
<dbReference type="PIR" id="G81504">
    <property type="entry name" value="G81504"/>
</dbReference>
<dbReference type="RefSeq" id="NP_224995.1">
    <property type="nucleotide sequence ID" value="NC_000922.1"/>
</dbReference>
<dbReference type="RefSeq" id="WP_010883437.1">
    <property type="nucleotide sequence ID" value="NZ_LN847257.1"/>
</dbReference>
<dbReference type="RefSeq" id="WP_010892260.1">
    <property type="nucleotide sequence ID" value="NZ_LN846995.1"/>
</dbReference>
<dbReference type="SMR" id="Q9Z7A6"/>
<dbReference type="STRING" id="406984.CPK_ORF00207"/>
<dbReference type="GeneID" id="45050855"/>
<dbReference type="KEGG" id="cpa:CP_1071"/>
<dbReference type="KEGG" id="cpj:eno"/>
<dbReference type="KEGG" id="cpn:CPn_0800"/>
<dbReference type="KEGG" id="cpt:CpB0829"/>
<dbReference type="PATRIC" id="fig|115713.3.peg.878"/>
<dbReference type="eggNOG" id="COG0148">
    <property type="taxonomic scope" value="Bacteria"/>
</dbReference>
<dbReference type="HOGENOM" id="CLU_031223_2_1_0"/>
<dbReference type="OrthoDB" id="9804716at2"/>
<dbReference type="UniPathway" id="UPA00109">
    <property type="reaction ID" value="UER00187"/>
</dbReference>
<dbReference type="Proteomes" id="UP000000583">
    <property type="component" value="Chromosome"/>
</dbReference>
<dbReference type="Proteomes" id="UP000000801">
    <property type="component" value="Chromosome"/>
</dbReference>
<dbReference type="GO" id="GO:0009986">
    <property type="term" value="C:cell surface"/>
    <property type="evidence" value="ECO:0007669"/>
    <property type="project" value="UniProtKB-SubCell"/>
</dbReference>
<dbReference type="GO" id="GO:0005576">
    <property type="term" value="C:extracellular region"/>
    <property type="evidence" value="ECO:0007669"/>
    <property type="project" value="UniProtKB-SubCell"/>
</dbReference>
<dbReference type="GO" id="GO:0000015">
    <property type="term" value="C:phosphopyruvate hydratase complex"/>
    <property type="evidence" value="ECO:0007669"/>
    <property type="project" value="InterPro"/>
</dbReference>
<dbReference type="GO" id="GO:0000287">
    <property type="term" value="F:magnesium ion binding"/>
    <property type="evidence" value="ECO:0007669"/>
    <property type="project" value="UniProtKB-UniRule"/>
</dbReference>
<dbReference type="GO" id="GO:0004634">
    <property type="term" value="F:phosphopyruvate hydratase activity"/>
    <property type="evidence" value="ECO:0007669"/>
    <property type="project" value="UniProtKB-UniRule"/>
</dbReference>
<dbReference type="GO" id="GO:0006096">
    <property type="term" value="P:glycolytic process"/>
    <property type="evidence" value="ECO:0007669"/>
    <property type="project" value="UniProtKB-UniRule"/>
</dbReference>
<dbReference type="CDD" id="cd03313">
    <property type="entry name" value="enolase"/>
    <property type="match status" value="1"/>
</dbReference>
<dbReference type="Gene3D" id="3.20.20.120">
    <property type="entry name" value="Enolase-like C-terminal domain"/>
    <property type="match status" value="1"/>
</dbReference>
<dbReference type="Gene3D" id="3.30.390.10">
    <property type="entry name" value="Enolase-like, N-terminal domain"/>
    <property type="match status" value="1"/>
</dbReference>
<dbReference type="HAMAP" id="MF_00318">
    <property type="entry name" value="Enolase"/>
    <property type="match status" value="1"/>
</dbReference>
<dbReference type="InterPro" id="IPR000941">
    <property type="entry name" value="Enolase"/>
</dbReference>
<dbReference type="InterPro" id="IPR036849">
    <property type="entry name" value="Enolase-like_C_sf"/>
</dbReference>
<dbReference type="InterPro" id="IPR029017">
    <property type="entry name" value="Enolase-like_N"/>
</dbReference>
<dbReference type="InterPro" id="IPR020810">
    <property type="entry name" value="Enolase_C"/>
</dbReference>
<dbReference type="InterPro" id="IPR020809">
    <property type="entry name" value="Enolase_CS"/>
</dbReference>
<dbReference type="InterPro" id="IPR020811">
    <property type="entry name" value="Enolase_N"/>
</dbReference>
<dbReference type="NCBIfam" id="TIGR01060">
    <property type="entry name" value="eno"/>
    <property type="match status" value="1"/>
</dbReference>
<dbReference type="PANTHER" id="PTHR11902">
    <property type="entry name" value="ENOLASE"/>
    <property type="match status" value="1"/>
</dbReference>
<dbReference type="PANTHER" id="PTHR11902:SF1">
    <property type="entry name" value="ENOLASE"/>
    <property type="match status" value="1"/>
</dbReference>
<dbReference type="Pfam" id="PF00113">
    <property type="entry name" value="Enolase_C"/>
    <property type="match status" value="1"/>
</dbReference>
<dbReference type="Pfam" id="PF03952">
    <property type="entry name" value="Enolase_N"/>
    <property type="match status" value="1"/>
</dbReference>
<dbReference type="PIRSF" id="PIRSF001400">
    <property type="entry name" value="Enolase"/>
    <property type="match status" value="1"/>
</dbReference>
<dbReference type="PRINTS" id="PR00148">
    <property type="entry name" value="ENOLASE"/>
</dbReference>
<dbReference type="SFLD" id="SFLDS00001">
    <property type="entry name" value="Enolase"/>
    <property type="match status" value="1"/>
</dbReference>
<dbReference type="SFLD" id="SFLDF00002">
    <property type="entry name" value="enolase"/>
    <property type="match status" value="1"/>
</dbReference>
<dbReference type="SMART" id="SM01192">
    <property type="entry name" value="Enolase_C"/>
    <property type="match status" value="1"/>
</dbReference>
<dbReference type="SMART" id="SM01193">
    <property type="entry name" value="Enolase_N"/>
    <property type="match status" value="1"/>
</dbReference>
<dbReference type="SUPFAM" id="SSF51604">
    <property type="entry name" value="Enolase C-terminal domain-like"/>
    <property type="match status" value="1"/>
</dbReference>
<dbReference type="SUPFAM" id="SSF54826">
    <property type="entry name" value="Enolase N-terminal domain-like"/>
    <property type="match status" value="1"/>
</dbReference>
<dbReference type="PROSITE" id="PS00164">
    <property type="entry name" value="ENOLASE"/>
    <property type="match status" value="1"/>
</dbReference>
<gene>
    <name evidence="1" type="primary">eno</name>
    <name type="ordered locus">CPn_0800</name>
    <name type="ordered locus">CP_1071</name>
    <name type="ordered locus">CpB0829</name>
</gene>
<organism>
    <name type="scientific">Chlamydia pneumoniae</name>
    <name type="common">Chlamydophila pneumoniae</name>
    <dbReference type="NCBI Taxonomy" id="83558"/>
    <lineage>
        <taxon>Bacteria</taxon>
        <taxon>Pseudomonadati</taxon>
        <taxon>Chlamydiota</taxon>
        <taxon>Chlamydiia</taxon>
        <taxon>Chlamydiales</taxon>
        <taxon>Chlamydiaceae</taxon>
        <taxon>Chlamydia/Chlamydophila group</taxon>
        <taxon>Chlamydia</taxon>
    </lineage>
</organism>